<reference key="1">
    <citation type="journal article" date="2004" name="Science">
        <title>The Ashbya gossypii genome as a tool for mapping the ancient Saccharomyces cerevisiae genome.</title>
        <authorList>
            <person name="Dietrich F.S."/>
            <person name="Voegeli S."/>
            <person name="Brachat S."/>
            <person name="Lerch A."/>
            <person name="Gates K."/>
            <person name="Steiner S."/>
            <person name="Mohr C."/>
            <person name="Poehlmann R."/>
            <person name="Luedi P."/>
            <person name="Choi S."/>
            <person name="Wing R.A."/>
            <person name="Flavier A."/>
            <person name="Gaffney T.D."/>
            <person name="Philippsen P."/>
        </authorList>
    </citation>
    <scope>NUCLEOTIDE SEQUENCE [LARGE SCALE GENOMIC DNA]</scope>
    <source>
        <strain>ATCC 10895 / CBS 109.51 / FGSC 9923 / NRRL Y-1056</strain>
    </source>
</reference>
<reference key="2">
    <citation type="journal article" date="2013" name="G3 (Bethesda)">
        <title>Genomes of Ashbya fungi isolated from insects reveal four mating-type loci, numerous translocations, lack of transposons, and distinct gene duplications.</title>
        <authorList>
            <person name="Dietrich F.S."/>
            <person name="Voegeli S."/>
            <person name="Kuo S."/>
            <person name="Philippsen P."/>
        </authorList>
    </citation>
    <scope>GENOME REANNOTATION</scope>
    <source>
        <strain>ATCC 10895 / CBS 109.51 / FGSC 9923 / NRRL Y-1056</strain>
    </source>
</reference>
<reference key="3">
    <citation type="unpublished observations" date="2023-10">
        <authorList>
            <person name="Leibundgut M.A."/>
            <person name="Ban N."/>
        </authorList>
    </citation>
    <scope>REVISION OF SUBUNIT</scope>
    <scope>NOMENCLATURE</scope>
</reference>
<evidence type="ECO:0000256" key="1">
    <source>
        <dbReference type="SAM" id="MobiDB-lite"/>
    </source>
</evidence>
<evidence type="ECO:0000305" key="2"/>
<evidence type="ECO:0000305" key="3">
    <source ref="3"/>
</evidence>
<comment type="subunit">
    <text evidence="3">Component of the small ribosomal subunit (Ref.3).</text>
</comment>
<comment type="miscellaneous">
    <text evidence="3">Initially thought to be part of the large ribosomal subunit. Crystal structures show eS32/eL41 to be a small ribosomal subunit forming a bridge at the interface of the 2 subunits.</text>
</comment>
<comment type="similarity">
    <text evidence="2">Belongs to the eukaryotic ribosomal protein eS32 family.</text>
</comment>
<feature type="chain" id="PRO_0000198072" description="Small ribosomal subunit protein eS32">
    <location>
        <begin position="1"/>
        <end position="25"/>
    </location>
</feature>
<feature type="region of interest" description="Disordered" evidence="1">
    <location>
        <begin position="1"/>
        <end position="25"/>
    </location>
</feature>
<dbReference type="EMBL" id="AE016817">
    <property type="protein sequence ID" value="AAS52023.1"/>
    <property type="molecule type" value="Genomic_DNA"/>
</dbReference>
<dbReference type="RefSeq" id="NP_984199.1">
    <property type="nucleotide sequence ID" value="NM_209552.1"/>
</dbReference>
<dbReference type="SMR" id="Q75AH3"/>
<dbReference type="FunCoup" id="Q75AH3">
    <property type="interactions" value="166"/>
</dbReference>
<dbReference type="EnsemblFungi" id="AAS52023">
    <property type="protein sequence ID" value="AAS52023"/>
    <property type="gene ID" value="AGOS_ADR103C"/>
</dbReference>
<dbReference type="GeneID" id="4620348"/>
<dbReference type="KEGG" id="ago:AGOS_ADR103C"/>
<dbReference type="eggNOG" id="ENOG502SCQA">
    <property type="taxonomic scope" value="Eukaryota"/>
</dbReference>
<dbReference type="HOGENOM" id="CLU_220499_1_0_1"/>
<dbReference type="InParanoid" id="Q75AH3"/>
<dbReference type="Proteomes" id="UP000000591">
    <property type="component" value="Chromosome IV"/>
</dbReference>
<dbReference type="GO" id="GO:1990904">
    <property type="term" value="C:ribonucleoprotein complex"/>
    <property type="evidence" value="ECO:0007669"/>
    <property type="project" value="UniProtKB-KW"/>
</dbReference>
<dbReference type="GO" id="GO:0005840">
    <property type="term" value="C:ribosome"/>
    <property type="evidence" value="ECO:0007669"/>
    <property type="project" value="UniProtKB-KW"/>
</dbReference>
<dbReference type="GO" id="GO:0003735">
    <property type="term" value="F:structural constituent of ribosome"/>
    <property type="evidence" value="ECO:0007669"/>
    <property type="project" value="InterPro"/>
</dbReference>
<dbReference type="GO" id="GO:0006412">
    <property type="term" value="P:translation"/>
    <property type="evidence" value="ECO:0007669"/>
    <property type="project" value="InterPro"/>
</dbReference>
<dbReference type="InterPro" id="IPR007836">
    <property type="entry name" value="Ribosomal_eS32"/>
</dbReference>
<dbReference type="Pfam" id="PF05162">
    <property type="entry name" value="Ribosomal_L41"/>
    <property type="match status" value="1"/>
</dbReference>
<proteinExistence type="evidence at protein level"/>
<sequence>MRAKWRKKRVRRLKRKRRKVRARSK</sequence>
<name>RS32_EREGS</name>
<protein>
    <recommendedName>
        <fullName evidence="3">Small ribosomal subunit protein eS32</fullName>
    </recommendedName>
    <alternativeName>
        <fullName>60S ribosomal protein L41</fullName>
    </alternativeName>
    <alternativeName>
        <fullName evidence="2">Large ribosomal subunit protein eL41</fullName>
    </alternativeName>
</protein>
<accession>Q75AH3</accession>
<keyword id="KW-1185">Reference proteome</keyword>
<keyword id="KW-0687">Ribonucleoprotein</keyword>
<keyword id="KW-0689">Ribosomal protein</keyword>
<gene>
    <name type="primary">RPL41</name>
    <name type="ordered locus">ADR103C</name>
</gene>
<organism>
    <name type="scientific">Eremothecium gossypii (strain ATCC 10895 / CBS 109.51 / FGSC 9923 / NRRL Y-1056)</name>
    <name type="common">Yeast</name>
    <name type="synonym">Ashbya gossypii</name>
    <dbReference type="NCBI Taxonomy" id="284811"/>
    <lineage>
        <taxon>Eukaryota</taxon>
        <taxon>Fungi</taxon>
        <taxon>Dikarya</taxon>
        <taxon>Ascomycota</taxon>
        <taxon>Saccharomycotina</taxon>
        <taxon>Saccharomycetes</taxon>
        <taxon>Saccharomycetales</taxon>
        <taxon>Saccharomycetaceae</taxon>
        <taxon>Eremothecium</taxon>
    </lineage>
</organism>